<accession>P9WM96</accession>
<accession>L0T2C4</accession>
<accession>P64669</accession>
<accession>P71598</accession>
<gene>
    <name type="ordered locus">MT0030.1</name>
</gene>
<reference key="1">
    <citation type="journal article" date="2002" name="J. Bacteriol.">
        <title>Whole-genome comparison of Mycobacterium tuberculosis clinical and laboratory strains.</title>
        <authorList>
            <person name="Fleischmann R.D."/>
            <person name="Alland D."/>
            <person name="Eisen J.A."/>
            <person name="Carpenter L."/>
            <person name="White O."/>
            <person name="Peterson J.D."/>
            <person name="DeBoy R.T."/>
            <person name="Dodson R.J."/>
            <person name="Gwinn M.L."/>
            <person name="Haft D.H."/>
            <person name="Hickey E.K."/>
            <person name="Kolonay J.F."/>
            <person name="Nelson W.C."/>
            <person name="Umayam L.A."/>
            <person name="Ermolaeva M.D."/>
            <person name="Salzberg S.L."/>
            <person name="Delcher A."/>
            <person name="Utterback T.R."/>
            <person name="Weidman J.F."/>
            <person name="Khouri H.M."/>
            <person name="Gill J."/>
            <person name="Mikula A."/>
            <person name="Bishai W."/>
            <person name="Jacobs W.R. Jr."/>
            <person name="Venter J.C."/>
            <person name="Fraser C.M."/>
        </authorList>
    </citation>
    <scope>NUCLEOTIDE SEQUENCE [LARGE SCALE GENOMIC DNA]</scope>
    <source>
        <strain>CDC 1551 / Oshkosh</strain>
    </source>
</reference>
<evidence type="ECO:0000305" key="1"/>
<comment type="sequence caution" evidence="1">
    <conflict type="erroneous initiation">
        <sequence resource="EMBL-CDS" id="AAK44253"/>
    </conflict>
</comment>
<keyword id="KW-1185">Reference proteome</keyword>
<feature type="chain" id="PRO_0000427342" description="Uncharacterized protein MT0030.1">
    <location>
        <begin position="1"/>
        <end position="101"/>
    </location>
</feature>
<dbReference type="EMBL" id="AE000516">
    <property type="protein sequence ID" value="AAK44253.1"/>
    <property type="status" value="ALT_INIT"/>
    <property type="molecule type" value="Genomic_DNA"/>
</dbReference>
<dbReference type="PIR" id="B70701">
    <property type="entry name" value="B70701"/>
</dbReference>
<dbReference type="RefSeq" id="WP_003400405.1">
    <property type="nucleotide sequence ID" value="NZ_KK341227.1"/>
</dbReference>
<dbReference type="SMR" id="P9WM96"/>
<dbReference type="KEGG" id="mtc:MT0030.1"/>
<dbReference type="PATRIC" id="fig|83331.31.peg.33"/>
<dbReference type="HOGENOM" id="CLU_156540_0_0_11"/>
<dbReference type="Proteomes" id="UP000001020">
    <property type="component" value="Chromosome"/>
</dbReference>
<dbReference type="InterPro" id="IPR024426">
    <property type="entry name" value="DUF2694"/>
</dbReference>
<dbReference type="Pfam" id="PF10904">
    <property type="entry name" value="DUF2694"/>
    <property type="match status" value="1"/>
</dbReference>
<name>Y028_MYCTO</name>
<proteinExistence type="predicted"/>
<sequence>MTDANPAFDTVHPSGHILVRSCRGGYMHSVSLSEAAMETDAETLAEAILLTADVSCLKALLEVRNEIVAAGHTPSAQVPTTDDLNVAIEKLLAHQLRRRNR</sequence>
<protein>
    <recommendedName>
        <fullName>Uncharacterized protein MT0030.1</fullName>
    </recommendedName>
</protein>
<organism>
    <name type="scientific">Mycobacterium tuberculosis (strain CDC 1551 / Oshkosh)</name>
    <dbReference type="NCBI Taxonomy" id="83331"/>
    <lineage>
        <taxon>Bacteria</taxon>
        <taxon>Bacillati</taxon>
        <taxon>Actinomycetota</taxon>
        <taxon>Actinomycetes</taxon>
        <taxon>Mycobacteriales</taxon>
        <taxon>Mycobacteriaceae</taxon>
        <taxon>Mycobacterium</taxon>
        <taxon>Mycobacterium tuberculosis complex</taxon>
    </lineage>
</organism>